<gene>
    <name evidence="1" type="primary">rpsR</name>
    <name type="ordered locus">EcE24377A_4763</name>
</gene>
<organism>
    <name type="scientific">Escherichia coli O139:H28 (strain E24377A / ETEC)</name>
    <dbReference type="NCBI Taxonomy" id="331111"/>
    <lineage>
        <taxon>Bacteria</taxon>
        <taxon>Pseudomonadati</taxon>
        <taxon>Pseudomonadota</taxon>
        <taxon>Gammaproteobacteria</taxon>
        <taxon>Enterobacterales</taxon>
        <taxon>Enterobacteriaceae</taxon>
        <taxon>Escherichia</taxon>
    </lineage>
</organism>
<sequence>MARYFRRRKFCRFTAEGVQEIDYKDIATLKNYITESGKIVPSRITGTRAKYQRQLARAIKRARYLSLLPYTDRHQ</sequence>
<proteinExistence type="inferred from homology"/>
<keyword id="KW-1185">Reference proteome</keyword>
<keyword id="KW-0687">Ribonucleoprotein</keyword>
<keyword id="KW-0689">Ribosomal protein</keyword>
<keyword id="KW-0694">RNA-binding</keyword>
<keyword id="KW-0699">rRNA-binding</keyword>
<accession>A7ZV73</accession>
<dbReference type="EMBL" id="CP000800">
    <property type="protein sequence ID" value="ABV20378.1"/>
    <property type="molecule type" value="Genomic_DNA"/>
</dbReference>
<dbReference type="RefSeq" id="WP_000135199.1">
    <property type="nucleotide sequence ID" value="NC_009801.1"/>
</dbReference>
<dbReference type="EMDB" id="EMD-12736"/>
<dbReference type="SMR" id="A7ZV73"/>
<dbReference type="GeneID" id="98186237"/>
<dbReference type="KEGG" id="ecw:EcE24377A_4763"/>
<dbReference type="HOGENOM" id="CLU_148710_2_3_6"/>
<dbReference type="Proteomes" id="UP000001122">
    <property type="component" value="Chromosome"/>
</dbReference>
<dbReference type="GO" id="GO:0022627">
    <property type="term" value="C:cytosolic small ribosomal subunit"/>
    <property type="evidence" value="ECO:0007669"/>
    <property type="project" value="TreeGrafter"/>
</dbReference>
<dbReference type="GO" id="GO:0070181">
    <property type="term" value="F:small ribosomal subunit rRNA binding"/>
    <property type="evidence" value="ECO:0007669"/>
    <property type="project" value="TreeGrafter"/>
</dbReference>
<dbReference type="GO" id="GO:0003735">
    <property type="term" value="F:structural constituent of ribosome"/>
    <property type="evidence" value="ECO:0007669"/>
    <property type="project" value="InterPro"/>
</dbReference>
<dbReference type="GO" id="GO:0006412">
    <property type="term" value="P:translation"/>
    <property type="evidence" value="ECO:0007669"/>
    <property type="project" value="UniProtKB-UniRule"/>
</dbReference>
<dbReference type="FunFam" id="4.10.640.10:FF:000001">
    <property type="entry name" value="30S ribosomal protein S18"/>
    <property type="match status" value="1"/>
</dbReference>
<dbReference type="Gene3D" id="4.10.640.10">
    <property type="entry name" value="Ribosomal protein S18"/>
    <property type="match status" value="1"/>
</dbReference>
<dbReference type="HAMAP" id="MF_00270">
    <property type="entry name" value="Ribosomal_bS18"/>
    <property type="match status" value="1"/>
</dbReference>
<dbReference type="InterPro" id="IPR001648">
    <property type="entry name" value="Ribosomal_bS18"/>
</dbReference>
<dbReference type="InterPro" id="IPR018275">
    <property type="entry name" value="Ribosomal_bS18_CS"/>
</dbReference>
<dbReference type="InterPro" id="IPR036870">
    <property type="entry name" value="Ribosomal_bS18_sf"/>
</dbReference>
<dbReference type="NCBIfam" id="TIGR00165">
    <property type="entry name" value="S18"/>
    <property type="match status" value="1"/>
</dbReference>
<dbReference type="PANTHER" id="PTHR13479">
    <property type="entry name" value="30S RIBOSOMAL PROTEIN S18"/>
    <property type="match status" value="1"/>
</dbReference>
<dbReference type="PANTHER" id="PTHR13479:SF40">
    <property type="entry name" value="SMALL RIBOSOMAL SUBUNIT PROTEIN BS18M"/>
    <property type="match status" value="1"/>
</dbReference>
<dbReference type="Pfam" id="PF01084">
    <property type="entry name" value="Ribosomal_S18"/>
    <property type="match status" value="1"/>
</dbReference>
<dbReference type="PRINTS" id="PR00974">
    <property type="entry name" value="RIBOSOMALS18"/>
</dbReference>
<dbReference type="SUPFAM" id="SSF46911">
    <property type="entry name" value="Ribosomal protein S18"/>
    <property type="match status" value="1"/>
</dbReference>
<dbReference type="PROSITE" id="PS00057">
    <property type="entry name" value="RIBOSOMAL_S18"/>
    <property type="match status" value="1"/>
</dbReference>
<reference key="1">
    <citation type="journal article" date="2008" name="J. Bacteriol.">
        <title>The pangenome structure of Escherichia coli: comparative genomic analysis of E. coli commensal and pathogenic isolates.</title>
        <authorList>
            <person name="Rasko D.A."/>
            <person name="Rosovitz M.J."/>
            <person name="Myers G.S.A."/>
            <person name="Mongodin E.F."/>
            <person name="Fricke W.F."/>
            <person name="Gajer P."/>
            <person name="Crabtree J."/>
            <person name="Sebaihia M."/>
            <person name="Thomson N.R."/>
            <person name="Chaudhuri R."/>
            <person name="Henderson I.R."/>
            <person name="Sperandio V."/>
            <person name="Ravel J."/>
        </authorList>
    </citation>
    <scope>NUCLEOTIDE SEQUENCE [LARGE SCALE GENOMIC DNA]</scope>
    <source>
        <strain>E24377A / ETEC</strain>
    </source>
</reference>
<name>RS18_ECO24</name>
<evidence type="ECO:0000255" key="1">
    <source>
        <dbReference type="HAMAP-Rule" id="MF_00270"/>
    </source>
</evidence>
<evidence type="ECO:0000305" key="2"/>
<feature type="chain" id="PRO_1000059137" description="Small ribosomal subunit protein bS18">
    <location>
        <begin position="1"/>
        <end position="75"/>
    </location>
</feature>
<protein>
    <recommendedName>
        <fullName evidence="1">Small ribosomal subunit protein bS18</fullName>
    </recommendedName>
    <alternativeName>
        <fullName evidence="2">30S ribosomal protein S18</fullName>
    </alternativeName>
</protein>
<comment type="function">
    <text evidence="1">Binds as a heterodimer with protein bS6 to the central domain of the 16S rRNA, where it helps stabilize the platform of the 30S subunit.</text>
</comment>
<comment type="subunit">
    <text evidence="1">Part of the 30S ribosomal subunit. Forms a tight heterodimer with protein bS6.</text>
</comment>
<comment type="similarity">
    <text evidence="1">Belongs to the bacterial ribosomal protein bS18 family.</text>
</comment>